<comment type="function">
    <text evidence="1 2">Epithelial ion channel that plays an important role in the regulation of epithelial ion and water transport and fluid homeostasis. Mediates the transport of chloride ions across the cell membrane (By similarity). Possesses an intrinsic ATPase activity and utilizes ATP to gate its channel; the passive flow of anions through the channel is gated by cycles of ATP binding and hydrolysis by the ATP-binding domains (By similarity). The ion channel is also permeable to HCO(3)(-); selectivity depends on the extracellular chloride concentration. Exerts its function also by modulating the activity of other ion channels and transporters. Contributes to the regulation of the pH and the ion content of the epithelial fluid layer. Modulates the activity of the epithelial sodium channel (ENaC) complex, in part by regulating the cell surface expression of the ENaC complex. May regulate bicarbonate secretion and salvage in epithelial cells by regulating the transporter SLC4A7. Can inhibit the chloride channel activity of ANO1 (By similarity). Plays a role in the chloride and bicarbonate homeostasis during sperm epididymal maturation and capacitation (By similarity).</text>
</comment>
<comment type="catalytic activity">
    <reaction evidence="1">
        <text>ATP + H2O + closed Cl(-) channel = ADP + phosphate + open Cl(-) channel.</text>
        <dbReference type="EC" id="5.6.1.6"/>
    </reaction>
</comment>
<comment type="catalytic activity">
    <reaction evidence="1">
        <text>chloride(in) = chloride(out)</text>
        <dbReference type="Rhea" id="RHEA:29823"/>
        <dbReference type="ChEBI" id="CHEBI:17996"/>
    </reaction>
</comment>
<comment type="catalytic activity">
    <reaction evidence="1">
        <text>hydrogencarbonate(in) = hydrogencarbonate(out)</text>
        <dbReference type="Rhea" id="RHEA:28695"/>
        <dbReference type="ChEBI" id="CHEBI:17544"/>
    </reaction>
</comment>
<comment type="catalytic activity">
    <reaction evidence="1">
        <text>ATP + H2O = ADP + phosphate + H(+)</text>
        <dbReference type="Rhea" id="RHEA:13065"/>
        <dbReference type="ChEBI" id="CHEBI:15377"/>
        <dbReference type="ChEBI" id="CHEBI:15378"/>
        <dbReference type="ChEBI" id="CHEBI:30616"/>
        <dbReference type="ChEBI" id="CHEBI:43474"/>
        <dbReference type="ChEBI" id="CHEBI:456216"/>
    </reaction>
    <physiologicalReaction direction="left-to-right" evidence="1">
        <dbReference type="Rhea" id="RHEA:13066"/>
    </physiologicalReaction>
</comment>
<comment type="subunit">
    <text evidence="1 2 3">Monomer; does not require oligomerization for channel activity. May form oligomers in the membrane (By similarity). Interacts with SLC26A3, SLC26A6 and NHERF1 (By similarity). Interacts with SHANK2 (By similarity). Interacts with MYO6 (By similarity). Interacts (via C-terminus) with GOPC (via PDZ domain); this promotes CFTR internalization and thereby decreases channel activity. Interacts with SLC4A7 through NHERF1. Found in a complex with MYO5B and RAB11A. Interacts with ANO1. Interacts with SLC26A8 (By similarity). Interacts with AHCYL1; the interaction increases CFTR activity (By similarity). Interacts with CSE1L (By similarity). The core-glycosylated form interacts with GORASP2 (via PDZ GRASP-type 1 domain) in respone to ER stress (By similarity). Interacts with MARCHF2; the interaction leads to CFTR ubiqtuitination and degradation (By similarity). Interacts with ADGRG2 (By similarity).</text>
</comment>
<comment type="subcellular location">
    <subcellularLocation>
        <location evidence="2">Apical cell membrane</location>
        <topology evidence="1">Multi-pass membrane protein</topology>
    </subcellularLocation>
    <subcellularLocation>
        <location evidence="1">Early endosome membrane</location>
        <topology evidence="1">Multi-pass membrane protein</topology>
    </subcellularLocation>
    <subcellularLocation>
        <location evidence="2">Cell membrane</location>
        <topology evidence="1">Multi-pass membrane protein</topology>
    </subcellularLocation>
    <subcellularLocation>
        <location evidence="1">Recycling endosome membrane</location>
        <topology evidence="1">Multi-pass membrane protein</topology>
    </subcellularLocation>
    <subcellularLocation>
        <location evidence="1">Endoplasmic reticulum membrane</location>
        <topology evidence="1">Multi-pass membrane protein</topology>
    </subcellularLocation>
    <subcellularLocation>
        <location evidence="3">Nucleus</location>
    </subcellularLocation>
    <text evidence="1 3">The channel is internalized from the cell surface into an endosomal recycling compartment, from where it is recycled to the cell membrane. In the oviduct and bronchus, detected on the apical side of epithelial cells, but not associated with cilia. In Sertoli cells, a processed product is detected in the nucleus. ER stress induces GORASP2-mediated unconventional (ER/Golgi-independent) trafficking of core-glycosylated CFTR to cell membrane.</text>
</comment>
<comment type="domain">
    <text evidence="1 2">Binds and hydrolyzes ATP via the two cytoplasmic ABC transporter nucleotide-binding domains. The two ATP-binding domains interact with each other, forming a head-to-tail dimer. Normal ATPase activity requires interaction between the two domains. The first ABC transporter nucleotide-binding domain has no ATPase activity by itself.</text>
</comment>
<comment type="domain">
    <text evidence="1">The PDZ-binding motif mediates interactions with GOPC and with the SLC4A7, NHERF1/EBP50 complex.</text>
</comment>
<comment type="domain">
    <text evidence="1">The disordered R region mediates channel activation when it is phosphorylated, but not in the absence of phosphorylation.</text>
</comment>
<comment type="PTM">
    <text evidence="1">N-glycosylated.</text>
</comment>
<comment type="PTM">
    <text evidence="1">Phosphorylated; cAMP treatment promotes phosphorylation and activates the channel. Dephosphorylation decreases the ATPase activity (in vitro). Phosphorylation at PKA sites activates the channel. Phosphorylation at PKC sites enhances the response to phosphorylation by PKA. Phosphorylated by AMPK; this inhibits channel activity.</text>
</comment>
<comment type="PTM">
    <text evidence="1">Ubiquitinated, leading to its degradation in the lysosome. Deubiquitination by USP10 in early endosomes enhances its endocytic recycling to the cell membrane. Ubiquitinated by RNF185 during ER stress. Ubiquitinated by MARCHF2 (By similarity).</text>
</comment>
<comment type="similarity">
    <text evidence="8">Belongs to the ABC transporter superfamily. ABCC family. CFTR transporter (TC 3.A.1.202) subfamily.</text>
</comment>
<accession>Q00552</accession>
<accession>G1UHC1</accession>
<accession>Q07E05</accession>
<evidence type="ECO:0000250" key="1">
    <source>
        <dbReference type="UniProtKB" id="P13569"/>
    </source>
</evidence>
<evidence type="ECO:0000250" key="2">
    <source>
        <dbReference type="UniProtKB" id="P26361"/>
    </source>
</evidence>
<evidence type="ECO:0000250" key="3">
    <source>
        <dbReference type="UniProtKB" id="P34158"/>
    </source>
</evidence>
<evidence type="ECO:0000255" key="4"/>
<evidence type="ECO:0000255" key="5">
    <source>
        <dbReference type="PROSITE-ProRule" id="PRU00434"/>
    </source>
</evidence>
<evidence type="ECO:0000255" key="6">
    <source>
        <dbReference type="PROSITE-ProRule" id="PRU00441"/>
    </source>
</evidence>
<evidence type="ECO:0000256" key="7">
    <source>
        <dbReference type="SAM" id="MobiDB-lite"/>
    </source>
</evidence>
<evidence type="ECO:0000305" key="8"/>
<keyword id="KW-0067">ATP-binding</keyword>
<keyword id="KW-1003">Cell membrane</keyword>
<keyword id="KW-0868">Chloride</keyword>
<keyword id="KW-0869">Chloride channel</keyword>
<keyword id="KW-0256">Endoplasmic reticulum</keyword>
<keyword id="KW-0967">Endosome</keyword>
<keyword id="KW-0325">Glycoprotein</keyword>
<keyword id="KW-0407">Ion channel</keyword>
<keyword id="KW-0406">Ion transport</keyword>
<keyword id="KW-0413">Isomerase</keyword>
<keyword id="KW-1017">Isopeptide bond</keyword>
<keyword id="KW-0449">Lipoprotein</keyword>
<keyword id="KW-0472">Membrane</keyword>
<keyword id="KW-0547">Nucleotide-binding</keyword>
<keyword id="KW-0539">Nucleus</keyword>
<keyword id="KW-0564">Palmitate</keyword>
<keyword id="KW-0597">Phosphoprotein</keyword>
<keyword id="KW-1185">Reference proteome</keyword>
<keyword id="KW-0677">Repeat</keyword>
<keyword id="KW-0812">Transmembrane</keyword>
<keyword id="KW-1133">Transmembrane helix</keyword>
<keyword id="KW-0813">Transport</keyword>
<keyword id="KW-0832">Ubl conjugation</keyword>
<protein>
    <recommendedName>
        <fullName evidence="1">Cystic fibrosis transmembrane conductance regulator</fullName>
        <shortName>CFTR</shortName>
    </recommendedName>
    <alternativeName>
        <fullName>ATP-binding cassette sub-family C member 7</fullName>
    </alternativeName>
    <alternativeName>
        <fullName>Channel conductance-controlling ATPase</fullName>
        <ecNumber evidence="1">5.6.1.6</ecNumber>
    </alternativeName>
    <alternativeName>
        <fullName>cAMP-dependent chloride channel</fullName>
    </alternativeName>
</protein>
<gene>
    <name evidence="1" type="primary">CFTR</name>
    <name type="synonym">ABCC7</name>
</gene>
<sequence length="1481" mass="168274">MQKSPLVKASVISKLFFSWTRPILKKGYRKRLEVSDIYQVPSADSADNLSEELEREWDRELASKKNPKLINALRRCFLWRFIFYGILLYLGEVTKAVQPLLLGRIIASYDPDNKEERSIAIYLAIGLCLLFIVRTLLLHPAIFGLQHIGMQMRIAMFSLIYKKTLKLSSRVLDKISIGQLVSLLSNNLNKFDEGLALAHFVWIAPLQVTLLMGLLWDLLQASAFCGLAVLIVLALFQAWLGKMMMKYRDQRAGKINERLVITSEMIENIQSVKAYCWEEAMEKMIENLRQTELKLTRKAAYMRYFNSAAFFFSGFFVVFLSVLPYAFLQGIILRKIFTTISFCIVLRMAITRQFPGAVQTWYDSLGAINKIQDFLQKQEYKTLEYNLTTTEVVMENVTAFWEEQGFGELLEKAKLNNNNRKISNGDNKLFFSNFSLLGSPVLKDINFKIEKGQLLAVAGSTGAGKTSLLMMILGELEPSEGKIKHSGRVSFCSQFSWIMPGTIKENIIFGVSYDEYRYRSVIKACQLEEDISKFAEKDNIVLGEGGITLSGGQRARISLARAVYKDADLYLLDSPFGYLDVLTEKQIFESCVCKLMANKTRILVTSKMEHLKKADKILILHEGSSYFYGTFSELQNLRPDFSSKLMGYDSFDQFSAERRNSILTETLRRFSLEGDPSVSFNETKKQSFKQTGEFGEKRKNSILNSINSIRKFSIVPKTPLQISGIEEDSDDPVERRLSLVPDSEQSDGLLLRSNVIHTGPTFQGSRRQSVLNLITHSVNQGQSFRRTTTAPSRKMSLAPQASLTEMDIYSRRLSQDSSLEINEEINEEDLKECFFDDVENIPTVTTWNTYLRYITVHKSLILVLIWCLIIFLAEVAASLVVLWLLKNNTPQQEMNSTQSGNRSYPVIITNTSFYYIFYIYVGVADTLLALGLFRGLPLVHTLITVSKILHHKMLRSVLQAPMSTLNALKAGGILNRFSKDIAILDDLLPLTIFDFIQLLLIVIGAIAVVSVLQPYIFLATVPVIAAFIMLRAYFLHTSQQLKQLESEGRSPIFTHLVTSLKGLWTLRAFGRQPYFETLFHKALNLHTANWFLYLSTLRWFQMRIEMIFVIFFIAVTFISILTTGEGQGSVGIILTLAMNIMSTLQWAVNSSIDVDSLMRSVSRVFKFIDMPEEGAPVKSIKPSRDDQLSKVMIIENQHVKKDDIWPSGGQMIVKDLTAKYVDGGIAILENISFSISPGQRVGLLGRTGSGKSTLLSAFLRLLNTEGEIQIDGVSWDSTPLQQWRKAFGVIPQKVFIFSGTFRKNLDPFGQWSDQEIWKVADEVGLRSVIEQFPGKLDFVLVDGGYVLSHGHKQLMCLARSVLSKAKILLLDEPSAHLDPITYQIIRRTIKQAFADCTVILCEHRIEAMLECQRFLVIEENKVRQYDSIQKLLSEKSLFRQAISSSDRLKLFPHRNSSKHKSRSQITALKEETEEEVQETRL</sequence>
<organism>
    <name type="scientific">Cavia porcellus</name>
    <name type="common">Guinea pig</name>
    <dbReference type="NCBI Taxonomy" id="10141"/>
    <lineage>
        <taxon>Eukaryota</taxon>
        <taxon>Metazoa</taxon>
        <taxon>Chordata</taxon>
        <taxon>Craniata</taxon>
        <taxon>Vertebrata</taxon>
        <taxon>Euteleostomi</taxon>
        <taxon>Mammalia</taxon>
        <taxon>Eutheria</taxon>
        <taxon>Euarchontoglires</taxon>
        <taxon>Glires</taxon>
        <taxon>Rodentia</taxon>
        <taxon>Hystricomorpha</taxon>
        <taxon>Caviidae</taxon>
        <taxon>Cavia</taxon>
    </lineage>
</organism>
<name>CFTR_CAVPO</name>
<reference key="1">
    <citation type="submission" date="2011-03" db="EMBL/GenBank/DDBJ databases">
        <title>Cloning of guinea pig CFTR.</title>
        <authorList>
            <person name="Ko S.B."/>
        </authorList>
    </citation>
    <scope>NUCLEOTIDE SEQUENCE [MRNA]</scope>
</reference>
<reference key="2">
    <citation type="submission" date="2006-09" db="EMBL/GenBank/DDBJ databases">
        <title>NISC comparative sequencing initiative.</title>
        <authorList>
            <person name="Antonellis A."/>
            <person name="Ayele K."/>
            <person name="Benjamin B."/>
            <person name="Blakesley R.W."/>
            <person name="Boakye A."/>
            <person name="Bouffard G.G."/>
            <person name="Brinkley C."/>
            <person name="Brooks S."/>
            <person name="Chu G."/>
            <person name="Coleman H."/>
            <person name="Engle J."/>
            <person name="Gestole M."/>
            <person name="Greene A."/>
            <person name="Guan X."/>
            <person name="Gupta J."/>
            <person name="Haghighi P."/>
            <person name="Han J."/>
            <person name="Hansen N."/>
            <person name="Ho S.-L."/>
            <person name="Hu P."/>
            <person name="Hunter G."/>
            <person name="Hurle B."/>
            <person name="Idol J.R."/>
            <person name="Kwong P."/>
            <person name="Laric P."/>
            <person name="Larson S."/>
            <person name="Lee-Lin S.-Q."/>
            <person name="Legaspi R."/>
            <person name="Madden M."/>
            <person name="Maduro Q.L."/>
            <person name="Maduro V.B."/>
            <person name="Margulies E.H."/>
            <person name="Masiello C."/>
            <person name="Maskeri B."/>
            <person name="McDowell J."/>
            <person name="Mojidi H.A."/>
            <person name="Mullikin J.C."/>
            <person name="Oestreicher J.S."/>
            <person name="Park M."/>
            <person name="Portnoy M.E."/>
            <person name="Prasad A."/>
            <person name="Puri O."/>
            <person name="Reddix-Dugue N."/>
            <person name="Schandler K."/>
            <person name="Schueler M.G."/>
            <person name="Sison C."/>
            <person name="Stantripop S."/>
            <person name="Stephen E."/>
            <person name="Taye A."/>
            <person name="Thomas J.W."/>
            <person name="Thomas P.J."/>
            <person name="Tsipouri V."/>
            <person name="Ung L."/>
            <person name="Vogt J.L."/>
            <person name="Wetherby K.D."/>
            <person name="Young A."/>
            <person name="Green E.D."/>
        </authorList>
    </citation>
    <scope>NUCLEOTIDE SEQUENCE [LARGE SCALE GENOMIC DNA]</scope>
</reference>
<reference key="3">
    <citation type="journal article" date="1991" name="J. Biol. Chem.">
        <title>A cross-species analysis of the cystic fibrosis transmembrane conductance regulator. Potential functional domains and regulatory sites.</title>
        <authorList>
            <person name="Diamond G."/>
            <person name="Scanlin T.F."/>
            <person name="Zasloff M.A."/>
            <person name="Bevins C.L."/>
        </authorList>
    </citation>
    <scope>NUCLEOTIDE SEQUENCE [GENOMIC DNA] OF 597-777</scope>
</reference>
<proteinExistence type="evidence at transcript level"/>
<dbReference type="EC" id="5.6.1.6" evidence="1"/>
<dbReference type="EMBL" id="AB618655">
    <property type="protein sequence ID" value="BAK78871.1"/>
    <property type="molecule type" value="mRNA"/>
</dbReference>
<dbReference type="EMBL" id="DP000184">
    <property type="protein sequence ID" value="ABI93671.1"/>
    <property type="molecule type" value="Genomic_DNA"/>
</dbReference>
<dbReference type="EMBL" id="M96679">
    <property type="protein sequence ID" value="AAA37033.1"/>
    <property type="molecule type" value="Genomic_DNA"/>
</dbReference>
<dbReference type="PIR" id="D39323">
    <property type="entry name" value="D39323"/>
</dbReference>
<dbReference type="RefSeq" id="NP_001265686.1">
    <property type="nucleotide sequence ID" value="NM_001278757.1"/>
</dbReference>
<dbReference type="BMRB" id="Q00552"/>
<dbReference type="SMR" id="Q00552"/>
<dbReference type="FunCoup" id="Q00552">
    <property type="interactions" value="370"/>
</dbReference>
<dbReference type="STRING" id="10141.ENSCPOP00000011489"/>
<dbReference type="GlyCosmos" id="Q00552">
    <property type="glycosylation" value="2 sites, No reported glycans"/>
</dbReference>
<dbReference type="GeneID" id="100719898"/>
<dbReference type="KEGG" id="cpoc:100719898"/>
<dbReference type="CTD" id="1080"/>
<dbReference type="eggNOG" id="KOG0054">
    <property type="taxonomic scope" value="Eukaryota"/>
</dbReference>
<dbReference type="HOGENOM" id="CLU_000604_27_1_1"/>
<dbReference type="InParanoid" id="Q00552"/>
<dbReference type="OrthoDB" id="6500128at2759"/>
<dbReference type="Proteomes" id="UP000005447">
    <property type="component" value="Unassembled WGS sequence"/>
</dbReference>
<dbReference type="GO" id="GO:0016324">
    <property type="term" value="C:apical plasma membrane"/>
    <property type="evidence" value="ECO:0000250"/>
    <property type="project" value="UniProtKB"/>
</dbReference>
<dbReference type="GO" id="GO:0034707">
    <property type="term" value="C:chloride channel complex"/>
    <property type="evidence" value="ECO:0007669"/>
    <property type="project" value="UniProtKB-KW"/>
</dbReference>
<dbReference type="GO" id="GO:0005829">
    <property type="term" value="C:cytosol"/>
    <property type="evidence" value="ECO:0007669"/>
    <property type="project" value="TreeGrafter"/>
</dbReference>
<dbReference type="GO" id="GO:0005769">
    <property type="term" value="C:early endosome"/>
    <property type="evidence" value="ECO:0000250"/>
    <property type="project" value="UniProtKB"/>
</dbReference>
<dbReference type="GO" id="GO:0031901">
    <property type="term" value="C:early endosome membrane"/>
    <property type="evidence" value="ECO:0007669"/>
    <property type="project" value="UniProtKB-SubCell"/>
</dbReference>
<dbReference type="GO" id="GO:0005789">
    <property type="term" value="C:endoplasmic reticulum membrane"/>
    <property type="evidence" value="ECO:0000250"/>
    <property type="project" value="UniProtKB"/>
</dbReference>
<dbReference type="GO" id="GO:0016020">
    <property type="term" value="C:membrane"/>
    <property type="evidence" value="ECO:0000250"/>
    <property type="project" value="UniProtKB"/>
</dbReference>
<dbReference type="GO" id="GO:0005634">
    <property type="term" value="C:nucleus"/>
    <property type="evidence" value="ECO:0000250"/>
    <property type="project" value="UniProtKB"/>
</dbReference>
<dbReference type="GO" id="GO:0005886">
    <property type="term" value="C:plasma membrane"/>
    <property type="evidence" value="ECO:0000250"/>
    <property type="project" value="UniProtKB"/>
</dbReference>
<dbReference type="GO" id="GO:0055038">
    <property type="term" value="C:recycling endosome membrane"/>
    <property type="evidence" value="ECO:0007669"/>
    <property type="project" value="UniProtKB-SubCell"/>
</dbReference>
<dbReference type="GO" id="GO:0140359">
    <property type="term" value="F:ABC-type transporter activity"/>
    <property type="evidence" value="ECO:0007669"/>
    <property type="project" value="InterPro"/>
</dbReference>
<dbReference type="GO" id="GO:0005524">
    <property type="term" value="F:ATP binding"/>
    <property type="evidence" value="ECO:0007669"/>
    <property type="project" value="UniProtKB-KW"/>
</dbReference>
<dbReference type="GO" id="GO:0016887">
    <property type="term" value="F:ATP hydrolysis activity"/>
    <property type="evidence" value="ECO:0000250"/>
    <property type="project" value="UniProtKB"/>
</dbReference>
<dbReference type="GO" id="GO:0015106">
    <property type="term" value="F:bicarbonate transmembrane transporter activity"/>
    <property type="evidence" value="ECO:0000250"/>
    <property type="project" value="UniProtKB"/>
</dbReference>
<dbReference type="GO" id="GO:0005254">
    <property type="term" value="F:chloride channel activity"/>
    <property type="evidence" value="ECO:0000250"/>
    <property type="project" value="UniProtKB"/>
</dbReference>
<dbReference type="GO" id="GO:0019869">
    <property type="term" value="F:chloride channel inhibitor activity"/>
    <property type="evidence" value="ECO:0000250"/>
    <property type="project" value="UniProtKB"/>
</dbReference>
<dbReference type="GO" id="GO:0015108">
    <property type="term" value="F:chloride transmembrane transporter activity"/>
    <property type="evidence" value="ECO:0000250"/>
    <property type="project" value="UniProtKB"/>
</dbReference>
<dbReference type="GO" id="GO:0005260">
    <property type="term" value="F:intracellularly ATP-gated chloride channel activity"/>
    <property type="evidence" value="ECO:0000250"/>
    <property type="project" value="UniProtKB"/>
</dbReference>
<dbReference type="GO" id="GO:0015701">
    <property type="term" value="P:bicarbonate transport"/>
    <property type="evidence" value="ECO:0000250"/>
    <property type="project" value="UniProtKB"/>
</dbReference>
<dbReference type="GO" id="GO:0071320">
    <property type="term" value="P:cellular response to cAMP"/>
    <property type="evidence" value="ECO:0000250"/>
    <property type="project" value="UniProtKB"/>
</dbReference>
<dbReference type="GO" id="GO:1904322">
    <property type="term" value="P:cellular response to forskolin"/>
    <property type="evidence" value="ECO:0000250"/>
    <property type="project" value="UniProtKB"/>
</dbReference>
<dbReference type="GO" id="GO:1902476">
    <property type="term" value="P:chloride transmembrane transport"/>
    <property type="evidence" value="ECO:0000250"/>
    <property type="project" value="UniProtKB"/>
</dbReference>
<dbReference type="GO" id="GO:0051454">
    <property type="term" value="P:intracellular pH elevation"/>
    <property type="evidence" value="ECO:0000250"/>
    <property type="project" value="UniProtKB"/>
</dbReference>
<dbReference type="GO" id="GO:0060081">
    <property type="term" value="P:membrane hyperpolarization"/>
    <property type="evidence" value="ECO:0000250"/>
    <property type="project" value="UniProtKB"/>
</dbReference>
<dbReference type="GO" id="GO:0050891">
    <property type="term" value="P:multicellular organismal-level water homeostasis"/>
    <property type="evidence" value="ECO:0000250"/>
    <property type="project" value="UniProtKB"/>
</dbReference>
<dbReference type="GO" id="GO:0034976">
    <property type="term" value="P:response to endoplasmic reticulum stress"/>
    <property type="evidence" value="ECO:0000250"/>
    <property type="project" value="UniProtKB"/>
</dbReference>
<dbReference type="GO" id="GO:0048240">
    <property type="term" value="P:sperm capacitation"/>
    <property type="evidence" value="ECO:0000250"/>
    <property type="project" value="UniProtKB"/>
</dbReference>
<dbReference type="GO" id="GO:0035377">
    <property type="term" value="P:transepithelial water transport"/>
    <property type="evidence" value="ECO:0000250"/>
    <property type="project" value="UniProtKB"/>
</dbReference>
<dbReference type="CDD" id="cd18594">
    <property type="entry name" value="ABC_6TM_CFTR_D1"/>
    <property type="match status" value="1"/>
</dbReference>
<dbReference type="CDD" id="cd18600">
    <property type="entry name" value="ABC_6TM_CFTR_D2"/>
    <property type="match status" value="1"/>
</dbReference>
<dbReference type="CDD" id="cd03291">
    <property type="entry name" value="ABCC_CFTR1"/>
    <property type="match status" value="1"/>
</dbReference>
<dbReference type="CDD" id="cd03289">
    <property type="entry name" value="ABCC_CFTR2"/>
    <property type="match status" value="1"/>
</dbReference>
<dbReference type="FunFam" id="1.20.1560.10:FF:000017">
    <property type="entry name" value="Cystic fibrosis transmembrane conductance regulator"/>
    <property type="match status" value="1"/>
</dbReference>
<dbReference type="FunFam" id="1.20.1560.10:FF:000019">
    <property type="entry name" value="Cystic fibrosis transmembrane conductance regulator"/>
    <property type="match status" value="1"/>
</dbReference>
<dbReference type="FunFam" id="3.40.50.300:FF:000581">
    <property type="entry name" value="Cystic fibrosis transmembrane conductance regulator"/>
    <property type="match status" value="1"/>
</dbReference>
<dbReference type="FunFam" id="3.40.50.300:FF:000591">
    <property type="entry name" value="Cystic fibrosis transmembrane conductance regulator"/>
    <property type="match status" value="1"/>
</dbReference>
<dbReference type="Gene3D" id="1.20.1560.10">
    <property type="entry name" value="ABC transporter type 1, transmembrane domain"/>
    <property type="match status" value="2"/>
</dbReference>
<dbReference type="Gene3D" id="3.40.50.300">
    <property type="entry name" value="P-loop containing nucleotide triphosphate hydrolases"/>
    <property type="match status" value="2"/>
</dbReference>
<dbReference type="InterPro" id="IPR003593">
    <property type="entry name" value="AAA+_ATPase"/>
</dbReference>
<dbReference type="InterPro" id="IPR011527">
    <property type="entry name" value="ABC1_TM_dom"/>
</dbReference>
<dbReference type="InterPro" id="IPR036640">
    <property type="entry name" value="ABC1_TM_sf"/>
</dbReference>
<dbReference type="InterPro" id="IPR003439">
    <property type="entry name" value="ABC_transporter-like_ATP-bd"/>
</dbReference>
<dbReference type="InterPro" id="IPR017871">
    <property type="entry name" value="ABC_transporter-like_CS"/>
</dbReference>
<dbReference type="InterPro" id="IPR050173">
    <property type="entry name" value="ABC_transporter_C-like"/>
</dbReference>
<dbReference type="InterPro" id="IPR009147">
    <property type="entry name" value="CFTR/ABCC7"/>
</dbReference>
<dbReference type="InterPro" id="IPR047082">
    <property type="entry name" value="CFTR1_ATP-bd_dom1"/>
</dbReference>
<dbReference type="InterPro" id="IPR025837">
    <property type="entry name" value="CFTR_reg_dom"/>
</dbReference>
<dbReference type="InterPro" id="IPR027417">
    <property type="entry name" value="P-loop_NTPase"/>
</dbReference>
<dbReference type="NCBIfam" id="TIGR01271">
    <property type="entry name" value="CFTR_protein"/>
    <property type="match status" value="1"/>
</dbReference>
<dbReference type="PANTHER" id="PTHR24223">
    <property type="entry name" value="ATP-BINDING CASSETTE SUB-FAMILY C"/>
    <property type="match status" value="1"/>
</dbReference>
<dbReference type="PANTHER" id="PTHR24223:SF19">
    <property type="entry name" value="CYSTIC FIBROSIS TRANSMEMBRANE CONDUCTANCE REGULATOR"/>
    <property type="match status" value="1"/>
</dbReference>
<dbReference type="Pfam" id="PF00664">
    <property type="entry name" value="ABC_membrane"/>
    <property type="match status" value="2"/>
</dbReference>
<dbReference type="Pfam" id="PF00005">
    <property type="entry name" value="ABC_tran"/>
    <property type="match status" value="2"/>
</dbReference>
<dbReference type="Pfam" id="PF14396">
    <property type="entry name" value="CFTR_R"/>
    <property type="match status" value="1"/>
</dbReference>
<dbReference type="PRINTS" id="PR01851">
    <property type="entry name" value="CYSFIBREGLTR"/>
</dbReference>
<dbReference type="SMART" id="SM00382">
    <property type="entry name" value="AAA"/>
    <property type="match status" value="2"/>
</dbReference>
<dbReference type="SUPFAM" id="SSF90123">
    <property type="entry name" value="ABC transporter transmembrane region"/>
    <property type="match status" value="2"/>
</dbReference>
<dbReference type="SUPFAM" id="SSF52540">
    <property type="entry name" value="P-loop containing nucleoside triphosphate hydrolases"/>
    <property type="match status" value="2"/>
</dbReference>
<dbReference type="PROSITE" id="PS50929">
    <property type="entry name" value="ABC_TM1F"/>
    <property type="match status" value="2"/>
</dbReference>
<dbReference type="PROSITE" id="PS00211">
    <property type="entry name" value="ABC_TRANSPORTER_1"/>
    <property type="match status" value="1"/>
</dbReference>
<dbReference type="PROSITE" id="PS50893">
    <property type="entry name" value="ABC_TRANSPORTER_2"/>
    <property type="match status" value="2"/>
</dbReference>
<feature type="chain" id="PRO_0000093418" description="Cystic fibrosis transmembrane conductance regulator">
    <location>
        <begin position="1"/>
        <end position="1481"/>
    </location>
</feature>
<feature type="topological domain" description="Cytoplasmic" evidence="1">
    <location>
        <begin position="1"/>
        <end position="77"/>
    </location>
</feature>
<feature type="transmembrane region" description="Helical; Name=1" evidence="1">
    <location>
        <begin position="78"/>
        <end position="98"/>
    </location>
</feature>
<feature type="topological domain" description="Extracellular" evidence="1">
    <location>
        <begin position="99"/>
        <end position="122"/>
    </location>
</feature>
<feature type="transmembrane region" description="Helical; Name=2" evidence="1">
    <location>
        <begin position="123"/>
        <end position="146"/>
    </location>
</feature>
<feature type="topological domain" description="Cytoplasmic" evidence="1">
    <location>
        <begin position="147"/>
        <end position="195"/>
    </location>
</feature>
<feature type="transmembrane region" description="Helical; Name=3" evidence="1">
    <location>
        <begin position="196"/>
        <end position="216"/>
    </location>
</feature>
<feature type="topological domain" description="Extracellular" evidence="1">
    <location>
        <begin position="217"/>
        <end position="222"/>
    </location>
</feature>
<feature type="transmembrane region" description="Helical; Name=4" evidence="1">
    <location>
        <begin position="223"/>
        <end position="243"/>
    </location>
</feature>
<feature type="topological domain" description="Cytoplasmic" evidence="1">
    <location>
        <begin position="244"/>
        <end position="298"/>
    </location>
</feature>
<feature type="transmembrane region" description="Helical; Name=5" evidence="1">
    <location>
        <begin position="299"/>
        <end position="319"/>
    </location>
</feature>
<feature type="topological domain" description="Extracellular" evidence="1">
    <location>
        <begin position="320"/>
        <end position="339"/>
    </location>
</feature>
<feature type="transmembrane region" description="Helical; Name=6" evidence="1">
    <location>
        <begin position="340"/>
        <end position="358"/>
    </location>
</feature>
<feature type="topological domain" description="Cytoplasmic" evidence="1">
    <location>
        <begin position="359"/>
        <end position="859"/>
    </location>
</feature>
<feature type="transmembrane region" description="Helical; Name=7" evidence="1">
    <location>
        <begin position="860"/>
        <end position="880"/>
    </location>
</feature>
<feature type="topological domain" description="Extracellular" evidence="1">
    <location>
        <begin position="881"/>
        <end position="919"/>
    </location>
</feature>
<feature type="transmembrane region" description="Discontinuously helical; Name=8" evidence="1">
    <location>
        <begin position="920"/>
        <end position="940"/>
    </location>
</feature>
<feature type="topological domain" description="Cytoplasmic" evidence="1">
    <location>
        <begin position="941"/>
        <end position="991"/>
    </location>
</feature>
<feature type="transmembrane region" description="Helical; Name=9" evidence="1">
    <location>
        <begin position="992"/>
        <end position="1012"/>
    </location>
</feature>
<feature type="topological domain" description="Extracellular" evidence="1">
    <location>
        <begin position="1013"/>
        <end position="1014"/>
    </location>
</feature>
<feature type="transmembrane region" description="Helical; Name=10" evidence="1">
    <location>
        <begin position="1015"/>
        <end position="1035"/>
    </location>
</feature>
<feature type="topological domain" description="Cytoplasmic" evidence="1">
    <location>
        <begin position="1036"/>
        <end position="1096"/>
    </location>
</feature>
<feature type="transmembrane region" description="Helical; Name=11" evidence="1">
    <location>
        <begin position="1097"/>
        <end position="1117"/>
    </location>
</feature>
<feature type="topological domain" description="Extracellular" evidence="1">
    <location>
        <begin position="1118"/>
        <end position="1131"/>
    </location>
</feature>
<feature type="transmembrane region" description="Helical; Name=12" evidence="1">
    <location>
        <begin position="1132"/>
        <end position="1152"/>
    </location>
</feature>
<feature type="topological domain" description="Cytoplasmic" evidence="1">
    <location>
        <begin position="1153"/>
        <end position="1481"/>
    </location>
</feature>
<feature type="domain" description="ABC transmembrane type-1 1" evidence="6">
    <location>
        <begin position="81"/>
        <end position="365"/>
    </location>
</feature>
<feature type="domain" description="ABC transporter 1" evidence="5">
    <location>
        <begin position="424"/>
        <end position="647"/>
    </location>
</feature>
<feature type="domain" description="ABC transmembrane type-1 2" evidence="6">
    <location>
        <begin position="860"/>
        <end position="1156"/>
    </location>
</feature>
<feature type="domain" description="ABC transporter 2" evidence="5">
    <location>
        <begin position="1211"/>
        <end position="1444"/>
    </location>
</feature>
<feature type="region of interest" description="Disordered R region" evidence="1">
    <location>
        <begin position="655"/>
        <end position="832"/>
    </location>
</feature>
<feature type="region of interest" description="Interaction with GORASP2" evidence="1">
    <location>
        <begin position="1387"/>
        <end position="1481"/>
    </location>
</feature>
<feature type="region of interest" description="Disordered" evidence="7">
    <location>
        <begin position="1453"/>
        <end position="1481"/>
    </location>
</feature>
<feature type="short sequence motif" description="PDZ-binding" evidence="1">
    <location>
        <begin position="1479"/>
        <end position="1481"/>
    </location>
</feature>
<feature type="compositionally biased region" description="Basic residues" evidence="7">
    <location>
        <begin position="1453"/>
        <end position="1462"/>
    </location>
</feature>
<feature type="compositionally biased region" description="Acidic residues" evidence="7">
    <location>
        <begin position="1471"/>
        <end position="1481"/>
    </location>
</feature>
<feature type="binding site" evidence="1">
    <location>
        <position position="401"/>
    </location>
    <ligand>
        <name>ATP</name>
        <dbReference type="ChEBI" id="CHEBI:30616"/>
        <label>1</label>
    </ligand>
</feature>
<feature type="binding site" evidence="1">
    <location>
        <position position="435"/>
    </location>
    <ligand>
        <name>ATP</name>
        <dbReference type="ChEBI" id="CHEBI:30616"/>
        <label>1</label>
    </ligand>
</feature>
<feature type="binding site" evidence="5">
    <location>
        <begin position="459"/>
        <end position="466"/>
    </location>
    <ligand>
        <name>ATP</name>
        <dbReference type="ChEBI" id="CHEBI:30616"/>
        <label>1</label>
    </ligand>
</feature>
<feature type="binding site" evidence="2">
    <location>
        <position position="494"/>
    </location>
    <ligand>
        <name>ATP</name>
        <dbReference type="ChEBI" id="CHEBI:30616"/>
        <label>1</label>
    </ligand>
</feature>
<feature type="binding site" evidence="1">
    <location>
        <position position="1220"/>
    </location>
    <ligand>
        <name>ATP</name>
        <dbReference type="ChEBI" id="CHEBI:30616"/>
        <label>2</label>
    </ligand>
</feature>
<feature type="binding site" evidence="5">
    <location>
        <begin position="1245"/>
        <end position="1252"/>
    </location>
    <ligand>
        <name>ATP</name>
        <dbReference type="ChEBI" id="CHEBI:30616"/>
        <label>2</label>
    </ligand>
</feature>
<feature type="modified residue" description="Phosphoserine" evidence="1">
    <location>
        <position position="550"/>
    </location>
</feature>
<feature type="modified residue" description="Phosphoserine; by PKA" evidence="1">
    <location>
        <position position="661"/>
    </location>
</feature>
<feature type="modified residue" description="Phosphoserine; by PKA" evidence="1">
    <location>
        <position position="671"/>
    </location>
</feature>
<feature type="modified residue" description="Phosphoserine; by PKC" evidence="1">
    <location>
        <position position="687"/>
    </location>
</feature>
<feature type="modified residue" description="Phosphoserine; by PKA" evidence="1">
    <location>
        <position position="701"/>
    </location>
</feature>
<feature type="modified residue" description="Phosphoserine; by PKA" evidence="1">
    <location>
        <position position="713"/>
    </location>
</feature>
<feature type="modified residue" description="Phosphothreonine" evidence="1">
    <location>
        <position position="718"/>
    </location>
</feature>
<feature type="modified residue" description="Phosphoserine; by PKA" evidence="1">
    <location>
        <position position="738"/>
    </location>
</feature>
<feature type="modified residue" description="Phosphoserine; by PKA" evidence="1">
    <location>
        <position position="769"/>
    </location>
</feature>
<feature type="modified residue" description="Phosphoserine; by PKA" evidence="1">
    <location>
        <position position="796"/>
    </location>
</feature>
<feature type="modified residue" description="Phosphoserine; by PKA" evidence="1">
    <location>
        <position position="814"/>
    </location>
</feature>
<feature type="modified residue" description="Phosphoserine" evidence="1">
    <location>
        <position position="1445"/>
    </location>
</feature>
<feature type="modified residue" description="Phosphoserine" evidence="1">
    <location>
        <position position="1457"/>
    </location>
</feature>
<feature type="lipid moiety-binding region" description="S-palmitoyl cysteine" evidence="1">
    <location>
        <position position="525"/>
    </location>
</feature>
<feature type="lipid moiety-binding region" description="S-palmitoyl cysteine" evidence="1">
    <location>
        <position position="1396"/>
    </location>
</feature>
<feature type="glycosylation site" description="N-linked (GlcNAc...) asparagine" evidence="4">
    <location>
        <position position="895"/>
    </location>
</feature>
<feature type="glycosylation site" description="N-linked (GlcNAc...) asparagine" evidence="4">
    <location>
        <position position="901"/>
    </location>
</feature>
<feature type="cross-link" description="Glycyl lysine isopeptide (Lys-Gly) (interchain with G-Cter in ubiquitin)" evidence="1">
    <location>
        <position position="689"/>
    </location>
</feature>
<feature type="sequence conflict" description="In Ref. 2; ABI93671." evidence="8" ref="2">
    <location>
        <position position="404"/>
    </location>
</feature>
<feature type="sequence conflict" description="In Ref. 3; AAA37033." evidence="8" ref="3">
    <original>ANK</original>
    <variation>TSG</variation>
    <location>
        <begin position="597"/>
        <end position="599"/>
    </location>
</feature>
<feature type="sequence conflict" description="In Ref. 3; AAA37033." evidence="8" ref="3">
    <original>SI</original>
    <variation>QF</variation>
    <location>
        <begin position="705"/>
        <end position="706"/>
    </location>
</feature>
<feature type="sequence conflict" description="In Ref. 3; AAA37033." evidence="8" ref="3">
    <original>R</original>
    <variation>T</variation>
    <location>
        <position position="710"/>
    </location>
</feature>
<feature type="sequence conflict" description="In Ref. 3; AAA37033." evidence="8" ref="3">
    <location>
        <position position="749"/>
    </location>
</feature>
<feature type="sequence conflict" description="In Ref. 3; AAA37033." evidence="8" ref="3">
    <original>SN</original>
    <variation>KH</variation>
    <location>
        <begin position="753"/>
        <end position="754"/>
    </location>
</feature>